<dbReference type="EC" id="4.1.1.19"/>
<dbReference type="EMBL" id="AE008384">
    <property type="protein sequence ID" value="AAM29982.1"/>
    <property type="molecule type" value="Genomic_DNA"/>
</dbReference>
<dbReference type="RefSeq" id="WP_011032240.1">
    <property type="nucleotide sequence ID" value="NC_003901.1"/>
</dbReference>
<dbReference type="SMR" id="P58889"/>
<dbReference type="KEGG" id="mma:MM_0286"/>
<dbReference type="PATRIC" id="fig|192952.21.peg.353"/>
<dbReference type="eggNOG" id="arCOG04490">
    <property type="taxonomic scope" value="Archaea"/>
</dbReference>
<dbReference type="HOGENOM" id="CLU_114389_0_0_2"/>
<dbReference type="Proteomes" id="UP000000595">
    <property type="component" value="Chromosome"/>
</dbReference>
<dbReference type="GO" id="GO:0008792">
    <property type="term" value="F:arginine decarboxylase activity"/>
    <property type="evidence" value="ECO:0007669"/>
    <property type="project" value="UniProtKB-UniRule"/>
</dbReference>
<dbReference type="GO" id="GO:0006527">
    <property type="term" value="P:arginine catabolic process"/>
    <property type="evidence" value="ECO:0007669"/>
    <property type="project" value="InterPro"/>
</dbReference>
<dbReference type="Gene3D" id="3.30.60.30">
    <property type="match status" value="1"/>
</dbReference>
<dbReference type="Gene3D" id="3.50.20.10">
    <property type="entry name" value="Pyruvoyl-Dependent Histidine Decarboxylase, subunit B"/>
    <property type="match status" value="1"/>
</dbReference>
<dbReference type="HAMAP" id="MF_01404">
    <property type="entry name" value="PvlArgDC"/>
    <property type="match status" value="1"/>
</dbReference>
<dbReference type="InterPro" id="IPR016104">
    <property type="entry name" value="Pyr-dep_his/arg-deCO2ase"/>
</dbReference>
<dbReference type="InterPro" id="IPR016105">
    <property type="entry name" value="Pyr-dep_his/arg-deCO2ase_sand"/>
</dbReference>
<dbReference type="InterPro" id="IPR002724">
    <property type="entry name" value="Pyruvoyl-dep_arg_deCO2ase"/>
</dbReference>
<dbReference type="NCBIfam" id="NF009064">
    <property type="entry name" value="PRK12398.1"/>
    <property type="match status" value="1"/>
</dbReference>
<dbReference type="NCBIfam" id="TIGR00286">
    <property type="entry name" value="pyruvoyl-dependent arginine decarboxylase"/>
    <property type="match status" value="1"/>
</dbReference>
<dbReference type="PANTHER" id="PTHR40438">
    <property type="entry name" value="PYRUVOYL-DEPENDENT ARGININE DECARBOXYLASE"/>
    <property type="match status" value="1"/>
</dbReference>
<dbReference type="PANTHER" id="PTHR40438:SF1">
    <property type="entry name" value="PYRUVOYL-DEPENDENT ARGININE DECARBOXYLASE"/>
    <property type="match status" value="1"/>
</dbReference>
<dbReference type="Pfam" id="PF01862">
    <property type="entry name" value="PvlArgDC"/>
    <property type="match status" value="1"/>
</dbReference>
<dbReference type="PIRSF" id="PIRSF005216">
    <property type="entry name" value="Pyruvoyl-dep_arg_deCO2ase"/>
    <property type="match status" value="1"/>
</dbReference>
<dbReference type="SFLD" id="SFLDG01170">
    <property type="entry name" value="Pyruvoyl-dependent_arginine_de"/>
    <property type="match status" value="1"/>
</dbReference>
<dbReference type="SFLD" id="SFLDS00055">
    <property type="entry name" value="Pyruvoyl-Dependent_Histidine/A"/>
    <property type="match status" value="1"/>
</dbReference>
<dbReference type="SUPFAM" id="SSF56271">
    <property type="entry name" value="Pyruvoyl-dependent histidine and arginine decarboxylases"/>
    <property type="match status" value="1"/>
</dbReference>
<sequence length="165" mass="17992">MITKLIPKKVFFTSGAGTHPEKLESFEAALRDACIEKFNLVTVSSILPPRCEIVTKEEGLKELSPGEIVFCVMSRISSNDPGKTLTSSVGCALPVDISKHGYISEYHAYEESAQDAGAHAVKLAESMYSTWTKEEPLKTFSIPRSSTVKDSGDWMTVISAAVFVI</sequence>
<gene>
    <name type="primary">pdaD1</name>
    <name type="ordered locus">MM_0286</name>
</gene>
<feature type="chain" id="PRO_0000023318" description="Pyruvoyl-dependent arginine decarboxylase 1 subunit beta" evidence="1">
    <location>
        <begin position="1"/>
        <end position="44"/>
    </location>
</feature>
<feature type="chain" id="PRO_0000023319" description="Pyruvoyl-dependent arginine decarboxylase 1 subunit alpha" evidence="1">
    <location>
        <begin position="45"/>
        <end position="165"/>
    </location>
</feature>
<feature type="site" description="Cleavage (non-hydrolytic)" evidence="1">
    <location>
        <begin position="44"/>
        <end position="45"/>
    </location>
</feature>
<feature type="modified residue" description="Pyruvic acid (Ser)" evidence="1">
    <location>
        <position position="45"/>
    </location>
</feature>
<name>PDAD1_METMA</name>
<accession>P58889</accession>
<reference key="1">
    <citation type="journal article" date="2002" name="J. Mol. Microbiol. Biotechnol.">
        <title>The genome of Methanosarcina mazei: evidence for lateral gene transfer between Bacteria and Archaea.</title>
        <authorList>
            <person name="Deppenmeier U."/>
            <person name="Johann A."/>
            <person name="Hartsch T."/>
            <person name="Merkl R."/>
            <person name="Schmitz R.A."/>
            <person name="Martinez-Arias R."/>
            <person name="Henne A."/>
            <person name="Wiezer A."/>
            <person name="Baeumer S."/>
            <person name="Jacobi C."/>
            <person name="Brueggemann H."/>
            <person name="Lienard T."/>
            <person name="Christmann A."/>
            <person name="Boemecke M."/>
            <person name="Steckel S."/>
            <person name="Bhattacharyya A."/>
            <person name="Lykidis A."/>
            <person name="Overbeek R."/>
            <person name="Klenk H.-P."/>
            <person name="Gunsalus R.P."/>
            <person name="Fritz H.-J."/>
            <person name="Gottschalk G."/>
        </authorList>
    </citation>
    <scope>NUCLEOTIDE SEQUENCE [LARGE SCALE GENOMIC DNA]</scope>
    <source>
        <strain>ATCC BAA-159 / DSM 3647 / Goe1 / Go1 / JCM 11833 / OCM 88</strain>
    </source>
</reference>
<keyword id="KW-0210">Decarboxylase</keyword>
<keyword id="KW-0456">Lyase</keyword>
<keyword id="KW-0670">Pyruvate</keyword>
<evidence type="ECO:0000250" key="1"/>
<evidence type="ECO:0000305" key="2"/>
<organism>
    <name type="scientific">Methanosarcina mazei (strain ATCC BAA-159 / DSM 3647 / Goe1 / Go1 / JCM 11833 / OCM 88)</name>
    <name type="common">Methanosarcina frisia</name>
    <dbReference type="NCBI Taxonomy" id="192952"/>
    <lineage>
        <taxon>Archaea</taxon>
        <taxon>Methanobacteriati</taxon>
        <taxon>Methanobacteriota</taxon>
        <taxon>Stenosarchaea group</taxon>
        <taxon>Methanomicrobia</taxon>
        <taxon>Methanosarcinales</taxon>
        <taxon>Methanosarcinaceae</taxon>
        <taxon>Methanosarcina</taxon>
    </lineage>
</organism>
<proteinExistence type="inferred from homology"/>
<comment type="catalytic activity">
    <reaction>
        <text>L-arginine + H(+) = agmatine + CO2</text>
        <dbReference type="Rhea" id="RHEA:17641"/>
        <dbReference type="ChEBI" id="CHEBI:15378"/>
        <dbReference type="ChEBI" id="CHEBI:16526"/>
        <dbReference type="ChEBI" id="CHEBI:32682"/>
        <dbReference type="ChEBI" id="CHEBI:58145"/>
        <dbReference type="EC" id="4.1.1.19"/>
    </reaction>
</comment>
<comment type="cofactor">
    <cofactor evidence="1">
        <name>pyruvate</name>
        <dbReference type="ChEBI" id="CHEBI:15361"/>
    </cofactor>
    <text evidence="1">Binds 1 pyruvoyl group covalently per subunit.</text>
</comment>
<comment type="similarity">
    <text evidence="2">Belongs to the PdaD family.</text>
</comment>
<protein>
    <recommendedName>
        <fullName>Pyruvoyl-dependent arginine decarboxylase 1</fullName>
        <shortName>PvlArgDC 1</shortName>
        <ecNumber>4.1.1.19</ecNumber>
    </recommendedName>
    <component>
        <recommendedName>
            <fullName>Pyruvoyl-dependent arginine decarboxylase 1 subunit beta</fullName>
        </recommendedName>
    </component>
    <component>
        <recommendedName>
            <fullName>Pyruvoyl-dependent arginine decarboxylase 1 subunit alpha</fullName>
        </recommendedName>
    </component>
</protein>